<reference key="1">
    <citation type="journal article" date="2004" name="Nucleic Acids Res.">
        <title>Genome sequence of Symbiobacterium thermophilum, an uncultivable bacterium that depends on microbial commensalism.</title>
        <authorList>
            <person name="Ueda K."/>
            <person name="Yamashita A."/>
            <person name="Ishikawa J."/>
            <person name="Shimada M."/>
            <person name="Watsuji T."/>
            <person name="Morimura K."/>
            <person name="Ikeda H."/>
            <person name="Hattori M."/>
            <person name="Beppu T."/>
        </authorList>
    </citation>
    <scope>NUCLEOTIDE SEQUENCE [LARGE SCALE GENOMIC DNA]</scope>
    <source>
        <strain>DSM 24528 / JCM 14929 / IAM 14863 / T</strain>
    </source>
</reference>
<gene>
    <name evidence="1" type="primary">obg</name>
    <name type="ordered locus">STH432</name>
</gene>
<organism>
    <name type="scientific">Symbiobacterium thermophilum (strain DSM 24528 / JCM 14929 / IAM 14863 / T)</name>
    <dbReference type="NCBI Taxonomy" id="292459"/>
    <lineage>
        <taxon>Bacteria</taxon>
        <taxon>Bacillati</taxon>
        <taxon>Bacillota</taxon>
        <taxon>Clostridia</taxon>
        <taxon>Eubacteriales</taxon>
        <taxon>Symbiobacteriaceae</taxon>
        <taxon>Symbiobacterium</taxon>
    </lineage>
</organism>
<feature type="chain" id="PRO_0000386330" description="GTPase Obg">
    <location>
        <begin position="1"/>
        <end position="425"/>
    </location>
</feature>
<feature type="domain" description="Obg" evidence="3">
    <location>
        <begin position="1"/>
        <end position="158"/>
    </location>
</feature>
<feature type="domain" description="OBG-type G" evidence="1">
    <location>
        <begin position="159"/>
        <end position="330"/>
    </location>
</feature>
<feature type="domain" description="OCT" evidence="2">
    <location>
        <begin position="345"/>
        <end position="422"/>
    </location>
</feature>
<feature type="binding site" evidence="1">
    <location>
        <begin position="165"/>
        <end position="172"/>
    </location>
    <ligand>
        <name>GTP</name>
        <dbReference type="ChEBI" id="CHEBI:37565"/>
    </ligand>
</feature>
<feature type="binding site" evidence="1">
    <location>
        <position position="172"/>
    </location>
    <ligand>
        <name>Mg(2+)</name>
        <dbReference type="ChEBI" id="CHEBI:18420"/>
    </ligand>
</feature>
<feature type="binding site" evidence="1">
    <location>
        <begin position="190"/>
        <end position="194"/>
    </location>
    <ligand>
        <name>GTP</name>
        <dbReference type="ChEBI" id="CHEBI:37565"/>
    </ligand>
</feature>
<feature type="binding site" evidence="1">
    <location>
        <position position="192"/>
    </location>
    <ligand>
        <name>Mg(2+)</name>
        <dbReference type="ChEBI" id="CHEBI:18420"/>
    </ligand>
</feature>
<feature type="binding site" evidence="1">
    <location>
        <begin position="212"/>
        <end position="215"/>
    </location>
    <ligand>
        <name>GTP</name>
        <dbReference type="ChEBI" id="CHEBI:37565"/>
    </ligand>
</feature>
<feature type="binding site" evidence="1">
    <location>
        <begin position="282"/>
        <end position="285"/>
    </location>
    <ligand>
        <name>GTP</name>
        <dbReference type="ChEBI" id="CHEBI:37565"/>
    </ligand>
</feature>
<feature type="binding site" evidence="1">
    <location>
        <begin position="311"/>
        <end position="313"/>
    </location>
    <ligand>
        <name>GTP</name>
        <dbReference type="ChEBI" id="CHEBI:37565"/>
    </ligand>
</feature>
<keyword id="KW-0963">Cytoplasm</keyword>
<keyword id="KW-0342">GTP-binding</keyword>
<keyword id="KW-0378">Hydrolase</keyword>
<keyword id="KW-0460">Magnesium</keyword>
<keyword id="KW-0479">Metal-binding</keyword>
<keyword id="KW-0547">Nucleotide-binding</keyword>
<keyword id="KW-1185">Reference proteome</keyword>
<comment type="function">
    <text evidence="1">An essential GTPase which binds GTP, GDP and possibly (p)ppGpp with moderate affinity, with high nucleotide exchange rates and a fairly low GTP hydrolysis rate. Plays a role in control of the cell cycle, stress response, ribosome biogenesis and in those bacteria that undergo differentiation, in morphogenesis control.</text>
</comment>
<comment type="cofactor">
    <cofactor evidence="1">
        <name>Mg(2+)</name>
        <dbReference type="ChEBI" id="CHEBI:18420"/>
    </cofactor>
</comment>
<comment type="subunit">
    <text evidence="1">Monomer.</text>
</comment>
<comment type="subcellular location">
    <subcellularLocation>
        <location evidence="1">Cytoplasm</location>
    </subcellularLocation>
</comment>
<comment type="similarity">
    <text evidence="1">Belongs to the TRAFAC class OBG-HflX-like GTPase superfamily. OBG GTPase family.</text>
</comment>
<accession>Q67SC6</accession>
<protein>
    <recommendedName>
        <fullName evidence="1">GTPase Obg</fullName>
        <ecNumber evidence="1">3.6.5.-</ecNumber>
    </recommendedName>
    <alternativeName>
        <fullName evidence="1">GTP-binding protein Obg</fullName>
    </alternativeName>
</protein>
<evidence type="ECO:0000255" key="1">
    <source>
        <dbReference type="HAMAP-Rule" id="MF_01454"/>
    </source>
</evidence>
<evidence type="ECO:0000255" key="2">
    <source>
        <dbReference type="PROSITE-ProRule" id="PRU01229"/>
    </source>
</evidence>
<evidence type="ECO:0000255" key="3">
    <source>
        <dbReference type="PROSITE-ProRule" id="PRU01231"/>
    </source>
</evidence>
<proteinExistence type="inferred from homology"/>
<dbReference type="EC" id="3.6.5.-" evidence="1"/>
<dbReference type="EMBL" id="AP006840">
    <property type="protein sequence ID" value="BAD39417.1"/>
    <property type="molecule type" value="Genomic_DNA"/>
</dbReference>
<dbReference type="RefSeq" id="WP_011194566.1">
    <property type="nucleotide sequence ID" value="NC_006177.1"/>
</dbReference>
<dbReference type="SMR" id="Q67SC6"/>
<dbReference type="STRING" id="292459.STH432"/>
<dbReference type="KEGG" id="sth:STH432"/>
<dbReference type="eggNOG" id="COG0536">
    <property type="taxonomic scope" value="Bacteria"/>
</dbReference>
<dbReference type="HOGENOM" id="CLU_011747_2_1_9"/>
<dbReference type="OrthoDB" id="9807318at2"/>
<dbReference type="Proteomes" id="UP000000417">
    <property type="component" value="Chromosome"/>
</dbReference>
<dbReference type="GO" id="GO:0005737">
    <property type="term" value="C:cytoplasm"/>
    <property type="evidence" value="ECO:0007669"/>
    <property type="project" value="UniProtKB-SubCell"/>
</dbReference>
<dbReference type="GO" id="GO:0005525">
    <property type="term" value="F:GTP binding"/>
    <property type="evidence" value="ECO:0007669"/>
    <property type="project" value="UniProtKB-UniRule"/>
</dbReference>
<dbReference type="GO" id="GO:0003924">
    <property type="term" value="F:GTPase activity"/>
    <property type="evidence" value="ECO:0007669"/>
    <property type="project" value="UniProtKB-UniRule"/>
</dbReference>
<dbReference type="GO" id="GO:0000287">
    <property type="term" value="F:magnesium ion binding"/>
    <property type="evidence" value="ECO:0007669"/>
    <property type="project" value="InterPro"/>
</dbReference>
<dbReference type="GO" id="GO:0042254">
    <property type="term" value="P:ribosome biogenesis"/>
    <property type="evidence" value="ECO:0007669"/>
    <property type="project" value="UniProtKB-UniRule"/>
</dbReference>
<dbReference type="CDD" id="cd01898">
    <property type="entry name" value="Obg"/>
    <property type="match status" value="1"/>
</dbReference>
<dbReference type="FunFam" id="2.70.210.12:FF:000001">
    <property type="entry name" value="GTPase Obg"/>
    <property type="match status" value="1"/>
</dbReference>
<dbReference type="Gene3D" id="3.30.300.350">
    <property type="entry name" value="GTP-binding protein OBG, C-terminal domain"/>
    <property type="match status" value="1"/>
</dbReference>
<dbReference type="Gene3D" id="2.70.210.12">
    <property type="entry name" value="GTP1/OBG domain"/>
    <property type="match status" value="1"/>
</dbReference>
<dbReference type="Gene3D" id="3.40.50.300">
    <property type="entry name" value="P-loop containing nucleotide triphosphate hydrolases"/>
    <property type="match status" value="1"/>
</dbReference>
<dbReference type="HAMAP" id="MF_01454">
    <property type="entry name" value="GTPase_Obg"/>
    <property type="match status" value="1"/>
</dbReference>
<dbReference type="InterPro" id="IPR031167">
    <property type="entry name" value="G_OBG"/>
</dbReference>
<dbReference type="InterPro" id="IPR006073">
    <property type="entry name" value="GTP-bd"/>
</dbReference>
<dbReference type="InterPro" id="IPR014100">
    <property type="entry name" value="GTP-bd_Obg/CgtA"/>
</dbReference>
<dbReference type="InterPro" id="IPR036346">
    <property type="entry name" value="GTP-bd_prot_GTP1/OBG_C_sf"/>
</dbReference>
<dbReference type="InterPro" id="IPR006074">
    <property type="entry name" value="GTP1-OBG_CS"/>
</dbReference>
<dbReference type="InterPro" id="IPR006169">
    <property type="entry name" value="GTP1_OBG_dom"/>
</dbReference>
<dbReference type="InterPro" id="IPR036726">
    <property type="entry name" value="GTP1_OBG_dom_sf"/>
</dbReference>
<dbReference type="InterPro" id="IPR045086">
    <property type="entry name" value="OBG_GTPase"/>
</dbReference>
<dbReference type="InterPro" id="IPR015349">
    <property type="entry name" value="OCT_dom"/>
</dbReference>
<dbReference type="InterPro" id="IPR027417">
    <property type="entry name" value="P-loop_NTPase"/>
</dbReference>
<dbReference type="NCBIfam" id="TIGR02729">
    <property type="entry name" value="Obg_CgtA"/>
    <property type="match status" value="1"/>
</dbReference>
<dbReference type="NCBIfam" id="TIGR03595">
    <property type="entry name" value="Obg_CgtA_exten"/>
    <property type="match status" value="1"/>
</dbReference>
<dbReference type="NCBIfam" id="NF008954">
    <property type="entry name" value="PRK12296.1"/>
    <property type="match status" value="1"/>
</dbReference>
<dbReference type="NCBIfam" id="NF008955">
    <property type="entry name" value="PRK12297.1"/>
    <property type="match status" value="1"/>
</dbReference>
<dbReference type="NCBIfam" id="NF008956">
    <property type="entry name" value="PRK12299.1"/>
    <property type="match status" value="1"/>
</dbReference>
<dbReference type="PANTHER" id="PTHR11702">
    <property type="entry name" value="DEVELOPMENTALLY REGULATED GTP-BINDING PROTEIN-RELATED"/>
    <property type="match status" value="1"/>
</dbReference>
<dbReference type="PANTHER" id="PTHR11702:SF31">
    <property type="entry name" value="MITOCHONDRIAL RIBOSOME-ASSOCIATED GTPASE 2"/>
    <property type="match status" value="1"/>
</dbReference>
<dbReference type="Pfam" id="PF09269">
    <property type="entry name" value="DUF1967"/>
    <property type="match status" value="1"/>
</dbReference>
<dbReference type="Pfam" id="PF01018">
    <property type="entry name" value="GTP1_OBG"/>
    <property type="match status" value="1"/>
</dbReference>
<dbReference type="Pfam" id="PF01926">
    <property type="entry name" value="MMR_HSR1"/>
    <property type="match status" value="1"/>
</dbReference>
<dbReference type="PRINTS" id="PR00326">
    <property type="entry name" value="GTP1OBG"/>
</dbReference>
<dbReference type="SUPFAM" id="SSF102741">
    <property type="entry name" value="Obg GTP-binding protein C-terminal domain"/>
    <property type="match status" value="1"/>
</dbReference>
<dbReference type="SUPFAM" id="SSF82051">
    <property type="entry name" value="Obg GTP-binding protein N-terminal domain"/>
    <property type="match status" value="1"/>
</dbReference>
<dbReference type="SUPFAM" id="SSF52540">
    <property type="entry name" value="P-loop containing nucleoside triphosphate hydrolases"/>
    <property type="match status" value="1"/>
</dbReference>
<dbReference type="PROSITE" id="PS51710">
    <property type="entry name" value="G_OBG"/>
    <property type="match status" value="1"/>
</dbReference>
<dbReference type="PROSITE" id="PS00905">
    <property type="entry name" value="GTP1_OBG"/>
    <property type="match status" value="1"/>
</dbReference>
<dbReference type="PROSITE" id="PS51883">
    <property type="entry name" value="OBG"/>
    <property type="match status" value="1"/>
</dbReference>
<dbReference type="PROSITE" id="PS51881">
    <property type="entry name" value="OCT"/>
    <property type="match status" value="1"/>
</dbReference>
<name>OBG_SYMTH</name>
<sequence>MFVDVARIYVKGGDGGRGSNSVRREKYVPQGGPWGGDGGRGGDVVFVVDPGLNTLVDFKYQKHFKAERGEHGGPKGMHGRKGEDLVIKVPPGTVVKDDDTGEVLFDLVEPGQRAVVARGGRGGRGNMRFATPTNKCPTFYEKGEPGEERWLLLELKVVADVGLVGFPNAGKSTFLSAVSAARPKIANYPFTTLTPVLGVVDLGEGRSFVIADIPGLIEGAHQGVGLGHEFLRHVERTKVLIHVLDGAGTEGRDPLSDFDVIHNELRAYNPELAARPTLVAFNKMDLPDARENLPRVREALEKRGYRVFPISGATREGFRPLLEAAYDLIRQWVPPEPAAPEAEMVYRPKEEGWRIYKYGGVWHVEGKEIERLVAMTMWENDEAVARFLRILRLKGVEQALREAGAEDGDTVRVCDIEFELMADPV</sequence>